<comment type="function">
    <text evidence="1">Secreted protein that acts as a virulence factor during infections.</text>
</comment>
<comment type="subcellular location">
    <subcellularLocation>
        <location evidence="6 7">Secreted</location>
    </subcellularLocation>
</comment>
<comment type="induction">
    <text evidence="4 5 6 7 8">Expression is specific to in opaque cells, in presence of lactate, and during hyphal growth. Expression is repressed in response to alpha pheromone.</text>
</comment>
<comment type="similarity">
    <text evidence="9">Belongs to the CRISP family.</text>
</comment>
<gene>
    <name type="primary">PRY1</name>
    <name type="ordered locus">CAALFM_C107580CA</name>
    <name type="ORF">CaO19.10303</name>
    <name type="ORF">CaO19.2787</name>
</gene>
<dbReference type="EMBL" id="CP017623">
    <property type="protein sequence ID" value="AOW26405.1"/>
    <property type="molecule type" value="Genomic_DNA"/>
</dbReference>
<dbReference type="RefSeq" id="XP_711729.1">
    <property type="nucleotide sequence ID" value="XM_706637.1"/>
</dbReference>
<dbReference type="SMR" id="Q59PV6"/>
<dbReference type="STRING" id="237561.Q59PV6"/>
<dbReference type="EnsemblFungi" id="C1_07580C_A-T">
    <property type="protein sequence ID" value="C1_07580C_A-T-p1"/>
    <property type="gene ID" value="C1_07580C_A"/>
</dbReference>
<dbReference type="GeneID" id="3646674"/>
<dbReference type="KEGG" id="cal:CAALFM_C107580CA"/>
<dbReference type="CGD" id="CAL0000185546">
    <property type="gene designation" value="PRY1"/>
</dbReference>
<dbReference type="VEuPathDB" id="FungiDB:C1_07580C_A"/>
<dbReference type="eggNOG" id="KOG3017">
    <property type="taxonomic scope" value="Eukaryota"/>
</dbReference>
<dbReference type="HOGENOM" id="CLU_035730_3_1_1"/>
<dbReference type="InParanoid" id="Q59PV6"/>
<dbReference type="OrthoDB" id="337038at2759"/>
<dbReference type="PRO" id="PR:Q59PV6"/>
<dbReference type="Proteomes" id="UP000000559">
    <property type="component" value="Chromosome 1"/>
</dbReference>
<dbReference type="GO" id="GO:0005576">
    <property type="term" value="C:extracellular region"/>
    <property type="evidence" value="ECO:0000314"/>
    <property type="project" value="CGD"/>
</dbReference>
<dbReference type="GO" id="GO:0005615">
    <property type="term" value="C:extracellular space"/>
    <property type="evidence" value="ECO:0000318"/>
    <property type="project" value="GO_Central"/>
</dbReference>
<dbReference type="GO" id="GO:0019953">
    <property type="term" value="P:sexual reproduction"/>
    <property type="evidence" value="ECO:0000318"/>
    <property type="project" value="GO_Central"/>
</dbReference>
<dbReference type="Gene3D" id="3.40.33.10">
    <property type="entry name" value="CAP"/>
    <property type="match status" value="1"/>
</dbReference>
<dbReference type="InterPro" id="IPR014044">
    <property type="entry name" value="CAP_dom"/>
</dbReference>
<dbReference type="InterPro" id="IPR035940">
    <property type="entry name" value="CAP_sf"/>
</dbReference>
<dbReference type="InterPro" id="IPR001283">
    <property type="entry name" value="CRISP-related"/>
</dbReference>
<dbReference type="PANTHER" id="PTHR10334">
    <property type="entry name" value="CYSTEINE-RICH SECRETORY PROTEIN-RELATED"/>
    <property type="match status" value="1"/>
</dbReference>
<dbReference type="Pfam" id="PF00188">
    <property type="entry name" value="CAP"/>
    <property type="match status" value="1"/>
</dbReference>
<dbReference type="PRINTS" id="PR00837">
    <property type="entry name" value="V5TPXLIKE"/>
</dbReference>
<dbReference type="SMART" id="SM00198">
    <property type="entry name" value="SCP"/>
    <property type="match status" value="1"/>
</dbReference>
<dbReference type="SUPFAM" id="SSF55797">
    <property type="entry name" value="PR-1-like"/>
    <property type="match status" value="1"/>
</dbReference>
<keyword id="KW-1185">Reference proteome</keyword>
<keyword id="KW-0964">Secreted</keyword>
<keyword id="KW-0732">Signal</keyword>
<organism>
    <name type="scientific">Candida albicans (strain SC5314 / ATCC MYA-2876)</name>
    <name type="common">Yeast</name>
    <dbReference type="NCBI Taxonomy" id="237561"/>
    <lineage>
        <taxon>Eukaryota</taxon>
        <taxon>Fungi</taxon>
        <taxon>Dikarya</taxon>
        <taxon>Ascomycota</taxon>
        <taxon>Saccharomycotina</taxon>
        <taxon>Pichiomycetes</taxon>
        <taxon>Debaryomycetaceae</taxon>
        <taxon>Candida/Lodderomyces clade</taxon>
        <taxon>Candida</taxon>
    </lineage>
</organism>
<feature type="signal peptide" evidence="2">
    <location>
        <begin position="1"/>
        <end position="20"/>
    </location>
</feature>
<feature type="chain" id="PRO_0000425797" description="Secreted protein PRY1">
    <location>
        <begin position="21"/>
        <end position="410"/>
    </location>
</feature>
<feature type="domain" description="SCP">
    <location>
        <begin position="283"/>
        <end position="394"/>
    </location>
</feature>
<feature type="region of interest" description="Disordered" evidence="3">
    <location>
        <begin position="64"/>
        <end position="86"/>
    </location>
</feature>
<feature type="region of interest" description="Disordered" evidence="3">
    <location>
        <begin position="102"/>
        <end position="132"/>
    </location>
</feature>
<feature type="region of interest" description="Disordered" evidence="3">
    <location>
        <begin position="148"/>
        <end position="260"/>
    </location>
</feature>
<feature type="compositionally biased region" description="Low complexity" evidence="3">
    <location>
        <begin position="148"/>
        <end position="179"/>
    </location>
</feature>
<feature type="compositionally biased region" description="Gly residues" evidence="3">
    <location>
        <begin position="197"/>
        <end position="211"/>
    </location>
</feature>
<feature type="compositionally biased region" description="Low complexity" evidence="3">
    <location>
        <begin position="212"/>
        <end position="260"/>
    </location>
</feature>
<evidence type="ECO:0000250" key="1"/>
<evidence type="ECO:0000255" key="2"/>
<evidence type="ECO:0000256" key="3">
    <source>
        <dbReference type="SAM" id="MobiDB-lite"/>
    </source>
</evidence>
<evidence type="ECO:0000269" key="4">
    <source>
    </source>
</evidence>
<evidence type="ECO:0000269" key="5">
    <source>
    </source>
</evidence>
<evidence type="ECO:0000269" key="6">
    <source>
    </source>
</evidence>
<evidence type="ECO:0000269" key="7">
    <source>
    </source>
</evidence>
<evidence type="ECO:0000269" key="8">
    <source>
    </source>
</evidence>
<evidence type="ECO:0000305" key="9"/>
<accession>Q59PV6</accession>
<accession>A0A1D8PE32</accession>
<accession>Q59PY0</accession>
<proteinExistence type="evidence at protein level"/>
<name>PRY1_CANAL</name>
<reference key="1">
    <citation type="journal article" date="2004" name="Proc. Natl. Acad. Sci. U.S.A.">
        <title>The diploid genome sequence of Candida albicans.</title>
        <authorList>
            <person name="Jones T."/>
            <person name="Federspiel N.A."/>
            <person name="Chibana H."/>
            <person name="Dungan J."/>
            <person name="Kalman S."/>
            <person name="Magee B.B."/>
            <person name="Newport G."/>
            <person name="Thorstenson Y.R."/>
            <person name="Agabian N."/>
            <person name="Magee P.T."/>
            <person name="Davis R.W."/>
            <person name="Scherer S."/>
        </authorList>
    </citation>
    <scope>NUCLEOTIDE SEQUENCE [LARGE SCALE GENOMIC DNA]</scope>
    <source>
        <strain>SC5314 / ATCC MYA-2876</strain>
    </source>
</reference>
<reference key="2">
    <citation type="journal article" date="2007" name="Genome Biol.">
        <title>Assembly of the Candida albicans genome into sixteen supercontigs aligned on the eight chromosomes.</title>
        <authorList>
            <person name="van het Hoog M."/>
            <person name="Rast T.J."/>
            <person name="Martchenko M."/>
            <person name="Grindle S."/>
            <person name="Dignard D."/>
            <person name="Hogues H."/>
            <person name="Cuomo C."/>
            <person name="Berriman M."/>
            <person name="Scherer S."/>
            <person name="Magee B.B."/>
            <person name="Whiteway M."/>
            <person name="Chibana H."/>
            <person name="Nantel A."/>
            <person name="Magee P.T."/>
        </authorList>
    </citation>
    <scope>GENOME REANNOTATION</scope>
    <source>
        <strain>SC5314 / ATCC MYA-2876</strain>
    </source>
</reference>
<reference key="3">
    <citation type="journal article" date="2013" name="Genome Biol.">
        <title>Assembly of a phased diploid Candida albicans genome facilitates allele-specific measurements and provides a simple model for repeat and indel structure.</title>
        <authorList>
            <person name="Muzzey D."/>
            <person name="Schwartz K."/>
            <person name="Weissman J.S."/>
            <person name="Sherlock G."/>
        </authorList>
    </citation>
    <scope>NUCLEOTIDE SEQUENCE [LARGE SCALE GENOMIC DNA]</scope>
    <scope>GENOME REANNOTATION</scope>
    <source>
        <strain>SC5314 / ATCC MYA-2876</strain>
    </source>
</reference>
<reference key="4">
    <citation type="journal article" date="2002" name="Eukaryot. Cell">
        <title>Large-scale identification of putative exported proteins in Candida albicans by genetic selection.</title>
        <authorList>
            <person name="Monteoliva L."/>
            <person name="Matas M.L."/>
            <person name="Gil C."/>
            <person name="Nombela C."/>
            <person name="Pla J."/>
        </authorList>
    </citation>
    <scope>IDENTIFICATION</scope>
</reference>
<reference key="5">
    <citation type="journal article" date="2003" name="Cell">
        <title>Evolution of a combinatorial transcriptional circuit: a case study in yeasts.</title>
        <authorList>
            <person name="Tsong A.E."/>
            <person name="Miller M.G."/>
            <person name="Raisner R.M."/>
            <person name="Johnson A.D."/>
        </authorList>
    </citation>
    <scope>INDUCTION</scope>
</reference>
<reference key="6">
    <citation type="journal article" date="2006" name="Mol. Microbiol.">
        <title>The role of nutrient regulation and the Gpa2 protein in the mating pheromone response of C. albicans.</title>
        <authorList>
            <person name="Bennett R.J."/>
            <person name="Johnson A.D."/>
        </authorList>
    </citation>
    <scope>INDUCTION</scope>
</reference>
<reference key="7">
    <citation type="journal article" date="2010" name="Yeast">
        <title>Mass spectrometric analysis of the secretome of Candida albicans.</title>
        <authorList>
            <person name="Sorgo A.G."/>
            <person name="Heilmann C.J."/>
            <person name="Dekker H.L."/>
            <person name="Brul S."/>
            <person name="de Koster C.G."/>
            <person name="Klis F.M."/>
        </authorList>
    </citation>
    <scope>IDENTIFICATION BY MASS SPECTROMETRY</scope>
    <scope>SUBCELLULAR LOCATION</scope>
    <scope>INDUCTION</scope>
</reference>
<reference key="8">
    <citation type="journal article" date="2012" name="Proteomics">
        <title>Carbon source-induced reprogramming of the cell wall proteome and secretome modulates the adherence and drug resistance of the fungal pathogen Candida albicans.</title>
        <authorList>
            <person name="Ene I.V."/>
            <person name="Heilmann C.J."/>
            <person name="Sorgo A.G."/>
            <person name="Walker L.A."/>
            <person name="de Koster C.G."/>
            <person name="Munro C.A."/>
            <person name="Klis F.M."/>
            <person name="Brown A.J."/>
        </authorList>
    </citation>
    <scope>IDENTIFICATION BY MASS SPECTROMETRY</scope>
    <scope>SUBCELLULAR LOCATION</scope>
    <scope>INDUCTION</scope>
</reference>
<reference key="9">
    <citation type="journal article" date="2013" name="Mol. Microbiol.">
        <title>A family of secreted pathogenesis-related proteins in Candida albicans.</title>
        <authorList>
            <person name="Rohm M."/>
            <person name="Lindemann E."/>
            <person name="Hiller E."/>
            <person name="Ermert D."/>
            <person name="Lemuth K."/>
            <person name="Trkulja D."/>
            <person name="Sogukpinar O."/>
            <person name="Brunner H."/>
            <person name="Rupp S."/>
            <person name="Urban C.F."/>
            <person name="Sohn K."/>
        </authorList>
    </citation>
    <scope>IDENTIFICATION</scope>
    <scope>INDUCTION</scope>
</reference>
<sequence length="410" mass="41180">MKQNYILSIILCYLLANVHSAPAIITVWQTVTDAQVAAGPTAAAPAANANANVQQAAAASAPAPAPVASPAAPAPASSAPQSSTPSSSGWLSNLFNSFFGGSDSDSSSGSDTASAAPASTSPQSSSSSSSSSGNSFLSFLSGLFGSGSSSSTPSSISQQQQQQQGSPASGSNSPNSAQPDAAAASNPVPQSNNNQGSGLGSGFGSGFGSGSGSDSDSGSGLPSASSSTIIQQQPSSSNIGSSSTSSSSSSSSSSSSSSSSSGDIYAAISQCDGIDASFASEILDAHNKYRAQHKVGDLSWDVDTYNYAKNNADNYDCSGVLTHTHGKFGENLAAGFKDGASTVAAWVDEPISYSDASFVYNHFTQVIWKGSTKVGCAYKDCRKSNWGLYVVCEYDPYGNVIGQGSKNVFP</sequence>
<protein>
    <recommendedName>
        <fullName>Secreted protein PRY1</fullName>
    </recommendedName>
    <alternativeName>
        <fullName>PRY family protein 1</fullName>
    </alternativeName>
    <alternativeName>
        <fullName>Pathogenesis-related protein 1</fullName>
    </alternativeName>
</protein>